<evidence type="ECO:0000255" key="1">
    <source>
        <dbReference type="HAMAP-Rule" id="MF_00144"/>
    </source>
</evidence>
<feature type="chain" id="PRO_1000076574" description="tRNA-specific 2-thiouridylase MnmA">
    <location>
        <begin position="1"/>
        <end position="372"/>
    </location>
</feature>
<feature type="region of interest" description="Interaction with target base in tRNA" evidence="1">
    <location>
        <begin position="97"/>
        <end position="99"/>
    </location>
</feature>
<feature type="region of interest" description="Interaction with tRNA" evidence="1">
    <location>
        <begin position="149"/>
        <end position="151"/>
    </location>
</feature>
<feature type="region of interest" description="Interaction with tRNA" evidence="1">
    <location>
        <begin position="309"/>
        <end position="310"/>
    </location>
</feature>
<feature type="active site" description="Nucleophile" evidence="1">
    <location>
        <position position="102"/>
    </location>
</feature>
<feature type="active site" description="Cysteine persulfide intermediate" evidence="1">
    <location>
        <position position="199"/>
    </location>
</feature>
<feature type="binding site" evidence="1">
    <location>
        <begin position="11"/>
        <end position="18"/>
    </location>
    <ligand>
        <name>ATP</name>
        <dbReference type="ChEBI" id="CHEBI:30616"/>
    </ligand>
</feature>
<feature type="binding site" evidence="1">
    <location>
        <position position="37"/>
    </location>
    <ligand>
        <name>ATP</name>
        <dbReference type="ChEBI" id="CHEBI:30616"/>
    </ligand>
</feature>
<feature type="binding site" evidence="1">
    <location>
        <position position="126"/>
    </location>
    <ligand>
        <name>ATP</name>
        <dbReference type="ChEBI" id="CHEBI:30616"/>
    </ligand>
</feature>
<feature type="site" description="Interaction with tRNA" evidence="1">
    <location>
        <position position="127"/>
    </location>
</feature>
<feature type="site" description="Interaction with tRNA" evidence="1">
    <location>
        <position position="342"/>
    </location>
</feature>
<feature type="disulfide bond" description="Alternate" evidence="1">
    <location>
        <begin position="102"/>
        <end position="199"/>
    </location>
</feature>
<comment type="function">
    <text evidence="1">Catalyzes the 2-thiolation of uridine at the wobble position (U34) of tRNA, leading to the formation of s(2)U34.</text>
</comment>
<comment type="catalytic activity">
    <reaction evidence="1">
        <text>S-sulfanyl-L-cysteinyl-[protein] + uridine(34) in tRNA + AH2 + ATP = 2-thiouridine(34) in tRNA + L-cysteinyl-[protein] + A + AMP + diphosphate + H(+)</text>
        <dbReference type="Rhea" id="RHEA:47032"/>
        <dbReference type="Rhea" id="RHEA-COMP:10131"/>
        <dbReference type="Rhea" id="RHEA-COMP:11726"/>
        <dbReference type="Rhea" id="RHEA-COMP:11727"/>
        <dbReference type="Rhea" id="RHEA-COMP:11728"/>
        <dbReference type="ChEBI" id="CHEBI:13193"/>
        <dbReference type="ChEBI" id="CHEBI:15378"/>
        <dbReference type="ChEBI" id="CHEBI:17499"/>
        <dbReference type="ChEBI" id="CHEBI:29950"/>
        <dbReference type="ChEBI" id="CHEBI:30616"/>
        <dbReference type="ChEBI" id="CHEBI:33019"/>
        <dbReference type="ChEBI" id="CHEBI:61963"/>
        <dbReference type="ChEBI" id="CHEBI:65315"/>
        <dbReference type="ChEBI" id="CHEBI:87170"/>
        <dbReference type="ChEBI" id="CHEBI:456215"/>
        <dbReference type="EC" id="2.8.1.13"/>
    </reaction>
</comment>
<comment type="subcellular location">
    <subcellularLocation>
        <location evidence="1">Cytoplasm</location>
    </subcellularLocation>
</comment>
<comment type="similarity">
    <text evidence="1">Belongs to the MnmA/TRMU family.</text>
</comment>
<reference key="1">
    <citation type="journal article" date="2007" name="BMC Microbiol.">
        <title>Subtle genetic changes enhance virulence of methicillin resistant and sensitive Staphylococcus aureus.</title>
        <authorList>
            <person name="Highlander S.K."/>
            <person name="Hulten K.G."/>
            <person name="Qin X."/>
            <person name="Jiang H."/>
            <person name="Yerrapragada S."/>
            <person name="Mason E.O. Jr."/>
            <person name="Shang Y."/>
            <person name="Williams T.M."/>
            <person name="Fortunov R.M."/>
            <person name="Liu Y."/>
            <person name="Igboeli O."/>
            <person name="Petrosino J."/>
            <person name="Tirumalai M."/>
            <person name="Uzman A."/>
            <person name="Fox G.E."/>
            <person name="Cardenas A.M."/>
            <person name="Muzny D.M."/>
            <person name="Hemphill L."/>
            <person name="Ding Y."/>
            <person name="Dugan S."/>
            <person name="Blyth P.R."/>
            <person name="Buhay C.J."/>
            <person name="Dinh H.H."/>
            <person name="Hawes A.C."/>
            <person name="Holder M."/>
            <person name="Kovar C.L."/>
            <person name="Lee S.L."/>
            <person name="Liu W."/>
            <person name="Nazareth L.V."/>
            <person name="Wang Q."/>
            <person name="Zhou J."/>
            <person name="Kaplan S.L."/>
            <person name="Weinstock G.M."/>
        </authorList>
    </citation>
    <scope>NUCLEOTIDE SEQUENCE [LARGE SCALE GENOMIC DNA]</scope>
    <source>
        <strain>USA300 / TCH1516</strain>
    </source>
</reference>
<accession>A8Z4F9</accession>
<gene>
    <name evidence="1" type="primary">mnmA</name>
    <name type="synonym">trmU</name>
    <name type="ordered locus">USA300HOU_1621</name>
</gene>
<dbReference type="EC" id="2.8.1.13" evidence="1"/>
<dbReference type="EMBL" id="CP000730">
    <property type="protein sequence ID" value="ABX29628.1"/>
    <property type="molecule type" value="Genomic_DNA"/>
</dbReference>
<dbReference type="RefSeq" id="WP_000066097.1">
    <property type="nucleotide sequence ID" value="NC_010079.1"/>
</dbReference>
<dbReference type="SMR" id="A8Z4F9"/>
<dbReference type="KEGG" id="sax:USA300HOU_1621"/>
<dbReference type="HOGENOM" id="CLU_035188_1_0_9"/>
<dbReference type="GO" id="GO:0005737">
    <property type="term" value="C:cytoplasm"/>
    <property type="evidence" value="ECO:0007669"/>
    <property type="project" value="UniProtKB-SubCell"/>
</dbReference>
<dbReference type="GO" id="GO:0005524">
    <property type="term" value="F:ATP binding"/>
    <property type="evidence" value="ECO:0007669"/>
    <property type="project" value="UniProtKB-KW"/>
</dbReference>
<dbReference type="GO" id="GO:0000049">
    <property type="term" value="F:tRNA binding"/>
    <property type="evidence" value="ECO:0007669"/>
    <property type="project" value="UniProtKB-KW"/>
</dbReference>
<dbReference type="GO" id="GO:0103016">
    <property type="term" value="F:tRNA-uridine 2-sulfurtransferase activity"/>
    <property type="evidence" value="ECO:0007669"/>
    <property type="project" value="UniProtKB-EC"/>
</dbReference>
<dbReference type="GO" id="GO:0002143">
    <property type="term" value="P:tRNA wobble position uridine thiolation"/>
    <property type="evidence" value="ECO:0007669"/>
    <property type="project" value="TreeGrafter"/>
</dbReference>
<dbReference type="CDD" id="cd01998">
    <property type="entry name" value="MnmA_TRMU-like"/>
    <property type="match status" value="1"/>
</dbReference>
<dbReference type="FunFam" id="2.30.30.280:FF:000001">
    <property type="entry name" value="tRNA-specific 2-thiouridylase MnmA"/>
    <property type="match status" value="1"/>
</dbReference>
<dbReference type="FunFam" id="2.40.30.10:FF:000023">
    <property type="entry name" value="tRNA-specific 2-thiouridylase MnmA"/>
    <property type="match status" value="1"/>
</dbReference>
<dbReference type="FunFam" id="3.40.50.620:FF:000004">
    <property type="entry name" value="tRNA-specific 2-thiouridylase MnmA"/>
    <property type="match status" value="1"/>
</dbReference>
<dbReference type="Gene3D" id="2.30.30.280">
    <property type="entry name" value="Adenine nucleotide alpha hydrolases-like domains"/>
    <property type="match status" value="1"/>
</dbReference>
<dbReference type="Gene3D" id="3.40.50.620">
    <property type="entry name" value="HUPs"/>
    <property type="match status" value="1"/>
</dbReference>
<dbReference type="Gene3D" id="2.40.30.10">
    <property type="entry name" value="Translation factors"/>
    <property type="match status" value="1"/>
</dbReference>
<dbReference type="HAMAP" id="MF_00144">
    <property type="entry name" value="tRNA_thiouridyl_MnmA"/>
    <property type="match status" value="1"/>
</dbReference>
<dbReference type="InterPro" id="IPR004506">
    <property type="entry name" value="MnmA-like"/>
</dbReference>
<dbReference type="InterPro" id="IPR046885">
    <property type="entry name" value="MnmA-like_C"/>
</dbReference>
<dbReference type="InterPro" id="IPR046884">
    <property type="entry name" value="MnmA-like_central"/>
</dbReference>
<dbReference type="InterPro" id="IPR023382">
    <property type="entry name" value="MnmA-like_central_sf"/>
</dbReference>
<dbReference type="InterPro" id="IPR014729">
    <property type="entry name" value="Rossmann-like_a/b/a_fold"/>
</dbReference>
<dbReference type="NCBIfam" id="NF001138">
    <property type="entry name" value="PRK00143.1"/>
    <property type="match status" value="1"/>
</dbReference>
<dbReference type="NCBIfam" id="TIGR00420">
    <property type="entry name" value="trmU"/>
    <property type="match status" value="1"/>
</dbReference>
<dbReference type="PANTHER" id="PTHR11933:SF5">
    <property type="entry name" value="MITOCHONDRIAL TRNA-SPECIFIC 2-THIOURIDYLASE 1"/>
    <property type="match status" value="1"/>
</dbReference>
<dbReference type="PANTHER" id="PTHR11933">
    <property type="entry name" value="TRNA 5-METHYLAMINOMETHYL-2-THIOURIDYLATE -METHYLTRANSFERASE"/>
    <property type="match status" value="1"/>
</dbReference>
<dbReference type="Pfam" id="PF03054">
    <property type="entry name" value="tRNA_Me_trans"/>
    <property type="match status" value="1"/>
</dbReference>
<dbReference type="Pfam" id="PF20258">
    <property type="entry name" value="tRNA_Me_trans_C"/>
    <property type="match status" value="1"/>
</dbReference>
<dbReference type="Pfam" id="PF20259">
    <property type="entry name" value="tRNA_Me_trans_M"/>
    <property type="match status" value="1"/>
</dbReference>
<dbReference type="SUPFAM" id="SSF52402">
    <property type="entry name" value="Adenine nucleotide alpha hydrolases-like"/>
    <property type="match status" value="1"/>
</dbReference>
<protein>
    <recommendedName>
        <fullName evidence="1">tRNA-specific 2-thiouridylase MnmA</fullName>
        <ecNumber evidence="1">2.8.1.13</ecNumber>
    </recommendedName>
</protein>
<keyword id="KW-0067">ATP-binding</keyword>
<keyword id="KW-0963">Cytoplasm</keyword>
<keyword id="KW-1015">Disulfide bond</keyword>
<keyword id="KW-0547">Nucleotide-binding</keyword>
<keyword id="KW-0694">RNA-binding</keyword>
<keyword id="KW-0808">Transferase</keyword>
<keyword id="KW-0819">tRNA processing</keyword>
<keyword id="KW-0820">tRNA-binding</keyword>
<proteinExistence type="inferred from homology"/>
<sequence length="372" mass="42150">MSNKDIRVVVGMSGGVDSSVTAHVLKEQGYDVIGIFMKNWDDTDENGVCTATEDYNDVIEVCNQIGIPYYAVNFEKEYWDKVFTYFLDEYKKGRTPNPDVMCNKEIKFKAFLDHAMNLGADYVATGHYARIHRHEDGHVEMLRGVDNNKDQTYFLNQLSQQQLSKVMFPIGDIEKSEVRRIAEEQGLVTAKKKDSTGICFIGEKNFKTFLSQYLPAQPGDMITLDGKKMGKHSGLMYYTIGQRHGLGIGGDGDPWFVVGKNLKDNVLYVEQGFHHDALYSDYLIASDYSFVNPEDNDLDQGFECTAKFRYRQKDTKVFVKRENDHALRVTFAEPVRAITPGQAVVFYQGDVCLGGATIDDVFKNEGQLNYVV</sequence>
<organism>
    <name type="scientific">Staphylococcus aureus (strain USA300 / TCH1516)</name>
    <dbReference type="NCBI Taxonomy" id="451516"/>
    <lineage>
        <taxon>Bacteria</taxon>
        <taxon>Bacillati</taxon>
        <taxon>Bacillota</taxon>
        <taxon>Bacilli</taxon>
        <taxon>Bacillales</taxon>
        <taxon>Staphylococcaceae</taxon>
        <taxon>Staphylococcus</taxon>
    </lineage>
</organism>
<name>MNMA_STAAT</name>